<feature type="chain" id="PRO_0000055434" description="Protein-export protein SecB">
    <location>
        <begin position="1"/>
        <end position="158"/>
    </location>
</feature>
<name>SECB_YERPS</name>
<comment type="function">
    <text evidence="1">One of the proteins required for the normal export of preproteins out of the cell cytoplasm. It is a molecular chaperone that binds to a subset of precursor proteins, maintaining them in a translocation-competent state. It also specifically binds to its receptor SecA.</text>
</comment>
<comment type="subunit">
    <text evidence="1">Homotetramer, a dimer of dimers. One homotetramer interacts with 1 SecA dimer.</text>
</comment>
<comment type="subcellular location">
    <subcellularLocation>
        <location evidence="1">Cytoplasm</location>
    </subcellularLocation>
</comment>
<comment type="similarity">
    <text evidence="1">Belongs to the SecB family.</text>
</comment>
<proteinExistence type="inferred from homology"/>
<sequence length="158" mass="17576">MSEQNNTEMAFQIQRIYTKDISFEAPNAPQVFQQDWQPEVKLDLDTASSQLAEDVYEVVLRVTVTASLGEETAFLCEVQQGGIFSVAGIEGTQLAHCLGAYCPNILFPYARECITSLVSRGTFPQLNLAPVNFDALFMNYLQQQAEGEVEGVEQRQDA</sequence>
<dbReference type="EMBL" id="BX936398">
    <property type="protein sequence ID" value="CAH19303.1"/>
    <property type="molecule type" value="Genomic_DNA"/>
</dbReference>
<dbReference type="RefSeq" id="WP_002208976.1">
    <property type="nucleotide sequence ID" value="NZ_CP009712.1"/>
</dbReference>
<dbReference type="SMR" id="Q66GB9"/>
<dbReference type="GeneID" id="96663547"/>
<dbReference type="KEGG" id="ypo:BZ17_2532"/>
<dbReference type="KEGG" id="yps:YPTB0063"/>
<dbReference type="PATRIC" id="fig|273123.14.peg.2657"/>
<dbReference type="Proteomes" id="UP000001011">
    <property type="component" value="Chromosome"/>
</dbReference>
<dbReference type="GO" id="GO:0005737">
    <property type="term" value="C:cytoplasm"/>
    <property type="evidence" value="ECO:0007669"/>
    <property type="project" value="UniProtKB-SubCell"/>
</dbReference>
<dbReference type="GO" id="GO:0051082">
    <property type="term" value="F:unfolded protein binding"/>
    <property type="evidence" value="ECO:0007669"/>
    <property type="project" value="InterPro"/>
</dbReference>
<dbReference type="GO" id="GO:0006457">
    <property type="term" value="P:protein folding"/>
    <property type="evidence" value="ECO:0007669"/>
    <property type="project" value="UniProtKB-UniRule"/>
</dbReference>
<dbReference type="GO" id="GO:0051262">
    <property type="term" value="P:protein tetramerization"/>
    <property type="evidence" value="ECO:0007669"/>
    <property type="project" value="InterPro"/>
</dbReference>
<dbReference type="GO" id="GO:0015031">
    <property type="term" value="P:protein transport"/>
    <property type="evidence" value="ECO:0007669"/>
    <property type="project" value="UniProtKB-UniRule"/>
</dbReference>
<dbReference type="CDD" id="cd00557">
    <property type="entry name" value="Translocase_SecB"/>
    <property type="match status" value="1"/>
</dbReference>
<dbReference type="FunFam" id="3.10.420.10:FF:000001">
    <property type="entry name" value="Protein-export chaperone SecB"/>
    <property type="match status" value="1"/>
</dbReference>
<dbReference type="Gene3D" id="3.10.420.10">
    <property type="entry name" value="SecB-like"/>
    <property type="match status" value="1"/>
</dbReference>
<dbReference type="HAMAP" id="MF_00821">
    <property type="entry name" value="SecB"/>
    <property type="match status" value="1"/>
</dbReference>
<dbReference type="InterPro" id="IPR003708">
    <property type="entry name" value="SecB"/>
</dbReference>
<dbReference type="InterPro" id="IPR035958">
    <property type="entry name" value="SecB-like_sf"/>
</dbReference>
<dbReference type="NCBIfam" id="NF004390">
    <property type="entry name" value="PRK05751.1-1"/>
    <property type="match status" value="1"/>
</dbReference>
<dbReference type="NCBIfam" id="NF004393">
    <property type="entry name" value="PRK05751.1-4"/>
    <property type="match status" value="1"/>
</dbReference>
<dbReference type="NCBIfam" id="TIGR00809">
    <property type="entry name" value="secB"/>
    <property type="match status" value="1"/>
</dbReference>
<dbReference type="PANTHER" id="PTHR36918">
    <property type="match status" value="1"/>
</dbReference>
<dbReference type="PANTHER" id="PTHR36918:SF1">
    <property type="entry name" value="PROTEIN-EXPORT PROTEIN SECB"/>
    <property type="match status" value="1"/>
</dbReference>
<dbReference type="Pfam" id="PF02556">
    <property type="entry name" value="SecB"/>
    <property type="match status" value="1"/>
</dbReference>
<dbReference type="PRINTS" id="PR01594">
    <property type="entry name" value="SECBCHAPRONE"/>
</dbReference>
<dbReference type="SUPFAM" id="SSF54611">
    <property type="entry name" value="SecB-like"/>
    <property type="match status" value="1"/>
</dbReference>
<evidence type="ECO:0000255" key="1">
    <source>
        <dbReference type="HAMAP-Rule" id="MF_00821"/>
    </source>
</evidence>
<reference key="1">
    <citation type="journal article" date="2004" name="Proc. Natl. Acad. Sci. U.S.A.">
        <title>Insights into the evolution of Yersinia pestis through whole-genome comparison with Yersinia pseudotuberculosis.</title>
        <authorList>
            <person name="Chain P.S.G."/>
            <person name="Carniel E."/>
            <person name="Larimer F.W."/>
            <person name="Lamerdin J."/>
            <person name="Stoutland P.O."/>
            <person name="Regala W.M."/>
            <person name="Georgescu A.M."/>
            <person name="Vergez L.M."/>
            <person name="Land M.L."/>
            <person name="Motin V.L."/>
            <person name="Brubaker R.R."/>
            <person name="Fowler J."/>
            <person name="Hinnebusch J."/>
            <person name="Marceau M."/>
            <person name="Medigue C."/>
            <person name="Simonet M."/>
            <person name="Chenal-Francisque V."/>
            <person name="Souza B."/>
            <person name="Dacheux D."/>
            <person name="Elliott J.M."/>
            <person name="Derbise A."/>
            <person name="Hauser L.J."/>
            <person name="Garcia E."/>
        </authorList>
    </citation>
    <scope>NUCLEOTIDE SEQUENCE [LARGE SCALE GENOMIC DNA]</scope>
    <source>
        <strain>IP32953</strain>
    </source>
</reference>
<protein>
    <recommendedName>
        <fullName evidence="1">Protein-export protein SecB</fullName>
    </recommendedName>
</protein>
<accession>Q66GB9</accession>
<organism>
    <name type="scientific">Yersinia pseudotuberculosis serotype I (strain IP32953)</name>
    <dbReference type="NCBI Taxonomy" id="273123"/>
    <lineage>
        <taxon>Bacteria</taxon>
        <taxon>Pseudomonadati</taxon>
        <taxon>Pseudomonadota</taxon>
        <taxon>Gammaproteobacteria</taxon>
        <taxon>Enterobacterales</taxon>
        <taxon>Yersiniaceae</taxon>
        <taxon>Yersinia</taxon>
    </lineage>
</organism>
<keyword id="KW-0143">Chaperone</keyword>
<keyword id="KW-0963">Cytoplasm</keyword>
<keyword id="KW-0653">Protein transport</keyword>
<keyword id="KW-0811">Translocation</keyword>
<keyword id="KW-0813">Transport</keyword>
<gene>
    <name evidence="1" type="primary">secB</name>
    <name type="ordered locus">YPTB0063</name>
</gene>